<proteinExistence type="evidence at protein level"/>
<comment type="function">
    <text evidence="3">Component of the ERLIN1/ERLIN2 complex which mediates the endoplasmic reticulum-associated degradation (ERAD) of inositol 1,4,5-trisphosphate receptors (IP3Rs) such as ITPR1. Promotes sterol-accelerated ERAD of HMGCR probably implicating an AMFR/gp78-containing ubiquitin ligase complex. Involved in regulation of cellular cholesterol homeostasis by regulation the SREBP signaling pathway. May promote ER retention of the SCAP-SREBF complex (By similarity).</text>
</comment>
<comment type="subunit">
    <text evidence="3 4">Forms a heteromeric complex with ERLIN1. In complex with ERLIN1, interacts with RNF170. Interacts with activated ITPR1, independently of the degree of ITPR1 polyubiquitination. Interacts with SCAP, INSIG1, SREBF1 and SREBF2 under cholesterol sufficiency conditions; indicative for an association with the SCAP-SREBP-INSIG complex. Probably part of an AMFR/gp78 and INSIG1-containing ubiquitin ligase complex involved in ERAD of HMGCR. Interacts with TMUB1; TMUB1 bridges the association with AMFR. Interacts with SYVN1 and RNF139. Interacts with TMEM259 (By similarity). Interacts with TMEM41B (By similarity).</text>
</comment>
<comment type="subcellular location">
    <subcellularLocation>
        <location evidence="1">Endoplasmic reticulum membrane</location>
        <topology evidence="1">Single-pass type II membrane protein</topology>
    </subcellularLocation>
    <text evidence="3">Associated with lipid raft-like domains of the endoplasmic reticulum membrane.</text>
</comment>
<comment type="PTM">
    <text evidence="2">Deubiquitinated by USP25; leading to stabilization.</text>
</comment>
<comment type="similarity">
    <text evidence="5">Belongs to the band 7/mec-2 family.</text>
</comment>
<accession>B5DEH2</accession>
<dbReference type="EMBL" id="CH473970">
    <property type="protein sequence ID" value="EDM09088.1"/>
    <property type="molecule type" value="Genomic_DNA"/>
</dbReference>
<dbReference type="EMBL" id="BC168668">
    <property type="protein sequence ID" value="AAI68668.1"/>
    <property type="molecule type" value="mRNA"/>
</dbReference>
<dbReference type="RefSeq" id="NP_001099558.1">
    <property type="nucleotide sequence ID" value="NM_001106088.2"/>
</dbReference>
<dbReference type="RefSeq" id="XP_008769545.1">
    <property type="nucleotide sequence ID" value="XM_008771323.4"/>
</dbReference>
<dbReference type="RefSeq" id="XP_008769546.1">
    <property type="nucleotide sequence ID" value="XM_008771324.4"/>
</dbReference>
<dbReference type="SMR" id="B5DEH2"/>
<dbReference type="BioGRID" id="253334">
    <property type="interactions" value="8"/>
</dbReference>
<dbReference type="FunCoup" id="B5DEH2">
    <property type="interactions" value="2848"/>
</dbReference>
<dbReference type="IntAct" id="B5DEH2">
    <property type="interactions" value="4"/>
</dbReference>
<dbReference type="MINT" id="B5DEH2"/>
<dbReference type="STRING" id="10116.ENSRNOP00000018973"/>
<dbReference type="GlyCosmos" id="B5DEH2">
    <property type="glycosylation" value="1 site, No reported glycans"/>
</dbReference>
<dbReference type="GlyGen" id="B5DEH2">
    <property type="glycosylation" value="1 site"/>
</dbReference>
<dbReference type="iPTMnet" id="B5DEH2"/>
<dbReference type="PhosphoSitePlus" id="B5DEH2"/>
<dbReference type="jPOST" id="B5DEH2"/>
<dbReference type="PaxDb" id="10116-ENSRNOP00000018973"/>
<dbReference type="PeptideAtlas" id="B5DEH2"/>
<dbReference type="Ensembl" id="ENSRNOT00000018973.7">
    <property type="protein sequence ID" value="ENSRNOP00000018973.5"/>
    <property type="gene ID" value="ENSRNOG00000013763.7"/>
</dbReference>
<dbReference type="GeneID" id="290823"/>
<dbReference type="KEGG" id="rno:290823"/>
<dbReference type="UCSC" id="RGD:1309010">
    <property type="organism name" value="rat"/>
</dbReference>
<dbReference type="AGR" id="RGD:1309010"/>
<dbReference type="CTD" id="11160"/>
<dbReference type="RGD" id="1309010">
    <property type="gene designation" value="Erlin2"/>
</dbReference>
<dbReference type="eggNOG" id="KOG2962">
    <property type="taxonomic scope" value="Eukaryota"/>
</dbReference>
<dbReference type="GeneTree" id="ENSGT00390000014666"/>
<dbReference type="HOGENOM" id="CLU_058701_0_0_1"/>
<dbReference type="InParanoid" id="B5DEH2"/>
<dbReference type="OMA" id="YNMVRNF"/>
<dbReference type="OrthoDB" id="77368at2759"/>
<dbReference type="PhylomeDB" id="B5DEH2"/>
<dbReference type="TreeFam" id="TF313059"/>
<dbReference type="Reactome" id="R-RNO-382556">
    <property type="pathway name" value="ABC-family proteins mediated transport"/>
</dbReference>
<dbReference type="PRO" id="PR:B5DEH2"/>
<dbReference type="Proteomes" id="UP000002494">
    <property type="component" value="Chromosome 16"/>
</dbReference>
<dbReference type="Proteomes" id="UP000234681">
    <property type="component" value="Chromosome 16"/>
</dbReference>
<dbReference type="Bgee" id="ENSRNOG00000013763">
    <property type="expression patterns" value="Expressed in adult mammalian kidney and 19 other cell types or tissues"/>
</dbReference>
<dbReference type="GO" id="GO:0005789">
    <property type="term" value="C:endoplasmic reticulum membrane"/>
    <property type="evidence" value="ECO:0000266"/>
    <property type="project" value="RGD"/>
</dbReference>
<dbReference type="GO" id="GO:0045121">
    <property type="term" value="C:membrane raft"/>
    <property type="evidence" value="ECO:0000266"/>
    <property type="project" value="RGD"/>
</dbReference>
<dbReference type="GO" id="GO:0032991">
    <property type="term" value="C:protein-containing complex"/>
    <property type="evidence" value="ECO:0000266"/>
    <property type="project" value="RGD"/>
</dbReference>
<dbReference type="GO" id="GO:0015485">
    <property type="term" value="F:cholesterol binding"/>
    <property type="evidence" value="ECO:0000318"/>
    <property type="project" value="GO_Central"/>
</dbReference>
<dbReference type="GO" id="GO:0031625">
    <property type="term" value="F:ubiquitin protein ligase binding"/>
    <property type="evidence" value="ECO:0000266"/>
    <property type="project" value="RGD"/>
</dbReference>
<dbReference type="GO" id="GO:0008203">
    <property type="term" value="P:cholesterol metabolic process"/>
    <property type="evidence" value="ECO:0007669"/>
    <property type="project" value="UniProtKB-KW"/>
</dbReference>
<dbReference type="GO" id="GO:0036503">
    <property type="term" value="P:ERAD pathway"/>
    <property type="evidence" value="ECO:0000266"/>
    <property type="project" value="RGD"/>
</dbReference>
<dbReference type="GO" id="GO:0045541">
    <property type="term" value="P:negative regulation of cholesterol biosynthetic process"/>
    <property type="evidence" value="ECO:0000266"/>
    <property type="project" value="RGD"/>
</dbReference>
<dbReference type="GO" id="GO:0045717">
    <property type="term" value="P:negative regulation of fatty acid biosynthetic process"/>
    <property type="evidence" value="ECO:0000266"/>
    <property type="project" value="RGD"/>
</dbReference>
<dbReference type="GO" id="GO:0045540">
    <property type="term" value="P:regulation of cholesterol biosynthetic process"/>
    <property type="evidence" value="ECO:0000266"/>
    <property type="project" value="RGD"/>
</dbReference>
<dbReference type="GO" id="GO:0032933">
    <property type="term" value="P:SREBP signaling pathway"/>
    <property type="evidence" value="ECO:0000266"/>
    <property type="project" value="RGD"/>
</dbReference>
<dbReference type="CDD" id="cd03406">
    <property type="entry name" value="SPFH_like_u3"/>
    <property type="match status" value="1"/>
</dbReference>
<dbReference type="FunFam" id="3.30.479.30:FF:000009">
    <property type="entry name" value="Erlin-2 isoform 1"/>
    <property type="match status" value="1"/>
</dbReference>
<dbReference type="Gene3D" id="3.30.479.30">
    <property type="entry name" value="Band 7 domain"/>
    <property type="match status" value="1"/>
</dbReference>
<dbReference type="InterPro" id="IPR001107">
    <property type="entry name" value="Band_7"/>
</dbReference>
<dbReference type="InterPro" id="IPR036013">
    <property type="entry name" value="Band_7/SPFH_dom_sf"/>
</dbReference>
<dbReference type="InterPro" id="IPR033294">
    <property type="entry name" value="Erlin1/2"/>
</dbReference>
<dbReference type="PANTHER" id="PTHR15351">
    <property type="entry name" value="ERLIN (ER LIPID RAFT ASSOCIATED PROTEIN) HOMOLOG"/>
    <property type="match status" value="1"/>
</dbReference>
<dbReference type="PANTHER" id="PTHR15351:SF4">
    <property type="entry name" value="ERLIN-2"/>
    <property type="match status" value="1"/>
</dbReference>
<dbReference type="Pfam" id="PF01145">
    <property type="entry name" value="Band_7"/>
    <property type="match status" value="1"/>
</dbReference>
<dbReference type="SMART" id="SM00244">
    <property type="entry name" value="PHB"/>
    <property type="match status" value="1"/>
</dbReference>
<reference evidence="6 8" key="1">
    <citation type="submission" date="2005-09" db="EMBL/GenBank/DDBJ databases">
        <authorList>
            <person name="Mural R.J."/>
            <person name="Adams M.D."/>
            <person name="Myers E.W."/>
            <person name="Smith H.O."/>
            <person name="Venter J.C."/>
        </authorList>
    </citation>
    <scope>NUCLEOTIDE SEQUENCE [LARGE SCALE GENOMIC DNA]</scope>
    <source>
        <strain evidence="8">Brown Norway</strain>
    </source>
</reference>
<reference evidence="7" key="2">
    <citation type="journal article" date="2004" name="Genome Res.">
        <title>The status, quality, and expansion of the NIH full-length cDNA project: the Mammalian Gene Collection (MGC).</title>
        <authorList>
            <consortium name="The MGC Project Team"/>
        </authorList>
    </citation>
    <scope>NUCLEOTIDE SEQUENCE [LARGE SCALE MRNA]</scope>
    <source>
        <tissue evidence="7">Prostate</tissue>
    </source>
</reference>
<reference evidence="6 8" key="3">
    <citation type="submission" date="2009-03" db="UniProtKB">
        <authorList>
            <person name="Maurya D.K."/>
            <person name="Bhargava P."/>
        </authorList>
    </citation>
    <scope>IDENTIFICATION BY MASS SPECTROMETRY</scope>
</reference>
<sequence length="339" mass="37710">MAQLGAVVAVASSFFCASLFSAVHKIEEGHIGVYYRGGALLTSTSGPGFHLMLPFITSYKSVQTTLQTDEVKNVPCGTSGGVMIYFDRIEVVNFLVPHAVYDIVKNYTADYDKALIFNKIHHELNQFCSVHTLQEVYIELFDQIDENLKLALQQDLTSMAPGLVIQAVRVTKPNIPEAIRRNYELMESEKTKLLIAAQKQKVVEKEAETERKKALIEAEKVAQVAEITYGQKVMEKETEKKISEIEDAAFLAREKAKADAECYTALKIAEANKLKLTPEYLQLMKYKAIASNSKIYFGKDIPNMFMDSAGGLGKQSEGLSDKLGFGLEDEPLETATKDN</sequence>
<feature type="chain" id="PRO_0000371230" description="Erlin-2">
    <location>
        <begin position="1"/>
        <end position="339"/>
    </location>
</feature>
<feature type="topological domain" description="Cytoplasmic" evidence="5">
    <location>
        <begin position="1"/>
        <end position="3"/>
    </location>
</feature>
<feature type="transmembrane region" description="Helical" evidence="5">
    <location>
        <begin position="4"/>
        <end position="24"/>
    </location>
</feature>
<feature type="topological domain" description="Extracellular" evidence="5">
    <location>
        <begin position="25"/>
        <end position="339"/>
    </location>
</feature>
<feature type="region of interest" description="Interaction with ERLIN1" evidence="1">
    <location>
        <begin position="177"/>
        <end position="309"/>
    </location>
</feature>
<feature type="modified residue" description="N6-acetyllysine" evidence="2">
    <location>
        <position position="267"/>
    </location>
</feature>
<feature type="glycosylation site" description="N-linked (GlcNAc...) asparagine" evidence="5">
    <location>
        <position position="106"/>
    </location>
</feature>
<keyword id="KW-0007">Acetylation</keyword>
<keyword id="KW-0153">Cholesterol metabolism</keyword>
<keyword id="KW-0256">Endoplasmic reticulum</keyword>
<keyword id="KW-0325">Glycoprotein</keyword>
<keyword id="KW-0443">Lipid metabolism</keyword>
<keyword id="KW-0472">Membrane</keyword>
<keyword id="KW-1185">Reference proteome</keyword>
<keyword id="KW-0735">Signal-anchor</keyword>
<keyword id="KW-0753">Steroid metabolism</keyword>
<keyword id="KW-1207">Sterol metabolism</keyword>
<keyword id="KW-0812">Transmembrane</keyword>
<keyword id="KW-1133">Transmembrane helix</keyword>
<evidence type="ECO:0000250" key="1"/>
<evidence type="ECO:0000250" key="2">
    <source>
        <dbReference type="UniProtKB" id="O75477"/>
    </source>
</evidence>
<evidence type="ECO:0000250" key="3">
    <source>
        <dbReference type="UniProtKB" id="O94905"/>
    </source>
</evidence>
<evidence type="ECO:0000250" key="4">
    <source>
        <dbReference type="UniProtKB" id="Q8BFZ9"/>
    </source>
</evidence>
<evidence type="ECO:0000255" key="5"/>
<evidence type="ECO:0000305" key="6"/>
<evidence type="ECO:0000312" key="7">
    <source>
        <dbReference type="EMBL" id="AAI68668.1"/>
    </source>
</evidence>
<evidence type="ECO:0000312" key="8">
    <source>
        <dbReference type="EMBL" id="EDM09088.1"/>
    </source>
</evidence>
<evidence type="ECO:0000312" key="9">
    <source>
        <dbReference type="RGD" id="1309010"/>
    </source>
</evidence>
<name>ERLN2_RAT</name>
<protein>
    <recommendedName>
        <fullName evidence="4">Erlin-2</fullName>
    </recommendedName>
    <alternativeName>
        <fullName evidence="4 7">Endoplasmic reticulum lipid raft-associated protein 2</fullName>
    </alternativeName>
    <alternativeName>
        <fullName evidence="4">Stomatin-prohibitin-flotillin-HflC/K domain-containing protein 2</fullName>
        <shortName evidence="4 7">SPFH domain-containing protein 2</shortName>
    </alternativeName>
</protein>
<gene>
    <name evidence="7 9" type="primary">Erlin2</name>
    <name evidence="4" type="synonym">Spfh2</name>
</gene>
<organism>
    <name type="scientific">Rattus norvegicus</name>
    <name type="common">Rat</name>
    <dbReference type="NCBI Taxonomy" id="10116"/>
    <lineage>
        <taxon>Eukaryota</taxon>
        <taxon>Metazoa</taxon>
        <taxon>Chordata</taxon>
        <taxon>Craniata</taxon>
        <taxon>Vertebrata</taxon>
        <taxon>Euteleostomi</taxon>
        <taxon>Mammalia</taxon>
        <taxon>Eutheria</taxon>
        <taxon>Euarchontoglires</taxon>
        <taxon>Glires</taxon>
        <taxon>Rodentia</taxon>
        <taxon>Myomorpha</taxon>
        <taxon>Muroidea</taxon>
        <taxon>Muridae</taxon>
        <taxon>Murinae</taxon>
        <taxon>Rattus</taxon>
    </lineage>
</organism>